<feature type="chain" id="PRO_0000060504" description="tRNA (guanine-N(1)-)-methyltransferase">
    <location>
        <begin position="1"/>
        <end position="261"/>
    </location>
</feature>
<feature type="binding site" evidence="1">
    <location>
        <position position="113"/>
    </location>
    <ligand>
        <name>S-adenosyl-L-methionine</name>
        <dbReference type="ChEBI" id="CHEBI:59789"/>
    </ligand>
</feature>
<feature type="binding site" evidence="1">
    <location>
        <begin position="133"/>
        <end position="138"/>
    </location>
    <ligand>
        <name>S-adenosyl-L-methionine</name>
        <dbReference type="ChEBI" id="CHEBI:59789"/>
    </ligand>
</feature>
<sequence length="261" mass="29406">MRIDVISLFPEFITQCVGFGVIGRAQERGLLDLHNWNPRDYAQGNYRRVDDRPFGGGPGMVMLIEPLRACLEAVRAADPQPAPLIYLSPQGVLLNQSRARKLAMLPRMILLCGRYEGIDERFITHEVNMELSIGDYVLSGGELGAAVVVDAVIRLQEGVLNDAESAKQDSFEAVDSLLDYPHYTHPSNHAFGNVPEVLRSGNHVAITRWRRQQSLLRTWLRRPDLIDEARLSKADRLLLDEIKRTHPMDTDQKASVSWRGV</sequence>
<gene>
    <name type="primary">trmD</name>
    <name type="ordered locus">XF_0109</name>
</gene>
<protein>
    <recommendedName>
        <fullName>tRNA (guanine-N(1)-)-methyltransferase</fullName>
        <ecNumber>2.1.1.228</ecNumber>
    </recommendedName>
    <alternativeName>
        <fullName>M1G-methyltransferase</fullName>
    </alternativeName>
    <alternativeName>
        <fullName>tRNA [GM37] methyltransferase</fullName>
    </alternativeName>
</protein>
<organism>
    <name type="scientific">Xylella fastidiosa (strain 9a5c)</name>
    <dbReference type="NCBI Taxonomy" id="160492"/>
    <lineage>
        <taxon>Bacteria</taxon>
        <taxon>Pseudomonadati</taxon>
        <taxon>Pseudomonadota</taxon>
        <taxon>Gammaproteobacteria</taxon>
        <taxon>Lysobacterales</taxon>
        <taxon>Lysobacteraceae</taxon>
        <taxon>Xylella</taxon>
    </lineage>
</organism>
<evidence type="ECO:0000250" key="1"/>
<evidence type="ECO:0000305" key="2"/>
<keyword id="KW-0963">Cytoplasm</keyword>
<keyword id="KW-0489">Methyltransferase</keyword>
<keyword id="KW-0949">S-adenosyl-L-methionine</keyword>
<keyword id="KW-0808">Transferase</keyword>
<keyword id="KW-0819">tRNA processing</keyword>
<name>TRMD_XYLFA</name>
<accession>Q9PH37</accession>
<comment type="function">
    <text evidence="1">Specifically methylates guanosine-37 in various tRNAs.</text>
</comment>
<comment type="catalytic activity">
    <reaction>
        <text>guanosine(37) in tRNA + S-adenosyl-L-methionine = N(1)-methylguanosine(37) in tRNA + S-adenosyl-L-homocysteine + H(+)</text>
        <dbReference type="Rhea" id="RHEA:36899"/>
        <dbReference type="Rhea" id="RHEA-COMP:10145"/>
        <dbReference type="Rhea" id="RHEA-COMP:10147"/>
        <dbReference type="ChEBI" id="CHEBI:15378"/>
        <dbReference type="ChEBI" id="CHEBI:57856"/>
        <dbReference type="ChEBI" id="CHEBI:59789"/>
        <dbReference type="ChEBI" id="CHEBI:73542"/>
        <dbReference type="ChEBI" id="CHEBI:74269"/>
        <dbReference type="EC" id="2.1.1.228"/>
    </reaction>
</comment>
<comment type="subunit">
    <text evidence="1">Homodimer.</text>
</comment>
<comment type="subcellular location">
    <subcellularLocation>
        <location evidence="2">Cytoplasm</location>
    </subcellularLocation>
</comment>
<comment type="similarity">
    <text evidence="2">Belongs to the RNA methyltransferase TrmD family.</text>
</comment>
<proteinExistence type="inferred from homology"/>
<reference key="1">
    <citation type="journal article" date="2000" name="Nature">
        <title>The genome sequence of the plant pathogen Xylella fastidiosa.</title>
        <authorList>
            <person name="Simpson A.J.G."/>
            <person name="Reinach F.C."/>
            <person name="Arruda P."/>
            <person name="Abreu F.A."/>
            <person name="Acencio M."/>
            <person name="Alvarenga R."/>
            <person name="Alves L.M.C."/>
            <person name="Araya J.E."/>
            <person name="Baia G.S."/>
            <person name="Baptista C.S."/>
            <person name="Barros M.H."/>
            <person name="Bonaccorsi E.D."/>
            <person name="Bordin S."/>
            <person name="Bove J.M."/>
            <person name="Briones M.R.S."/>
            <person name="Bueno M.R.P."/>
            <person name="Camargo A.A."/>
            <person name="Camargo L.E.A."/>
            <person name="Carraro D.M."/>
            <person name="Carrer H."/>
            <person name="Colauto N.B."/>
            <person name="Colombo C."/>
            <person name="Costa F.F."/>
            <person name="Costa M.C.R."/>
            <person name="Costa-Neto C.M."/>
            <person name="Coutinho L.L."/>
            <person name="Cristofani M."/>
            <person name="Dias-Neto E."/>
            <person name="Docena C."/>
            <person name="El-Dorry H."/>
            <person name="Facincani A.P."/>
            <person name="Ferreira A.J.S."/>
            <person name="Ferreira V.C.A."/>
            <person name="Ferro J.A."/>
            <person name="Fraga J.S."/>
            <person name="Franca S.C."/>
            <person name="Franco M.C."/>
            <person name="Frohme M."/>
            <person name="Furlan L.R."/>
            <person name="Garnier M."/>
            <person name="Goldman G.H."/>
            <person name="Goldman M.H.S."/>
            <person name="Gomes S.L."/>
            <person name="Gruber A."/>
            <person name="Ho P.L."/>
            <person name="Hoheisel J.D."/>
            <person name="Junqueira M.L."/>
            <person name="Kemper E.L."/>
            <person name="Kitajima J.P."/>
            <person name="Krieger J.E."/>
            <person name="Kuramae E.E."/>
            <person name="Laigret F."/>
            <person name="Lambais M.R."/>
            <person name="Leite L.C.C."/>
            <person name="Lemos E.G.M."/>
            <person name="Lemos M.V.F."/>
            <person name="Lopes S.A."/>
            <person name="Lopes C.R."/>
            <person name="Machado J.A."/>
            <person name="Machado M.A."/>
            <person name="Madeira A.M.B.N."/>
            <person name="Madeira H.M.F."/>
            <person name="Marino C.L."/>
            <person name="Marques M.V."/>
            <person name="Martins E.A.L."/>
            <person name="Martins E.M.F."/>
            <person name="Matsukuma A.Y."/>
            <person name="Menck C.F.M."/>
            <person name="Miracca E.C."/>
            <person name="Miyaki C.Y."/>
            <person name="Monteiro-Vitorello C.B."/>
            <person name="Moon D.H."/>
            <person name="Nagai M.A."/>
            <person name="Nascimento A.L.T.O."/>
            <person name="Netto L.E.S."/>
            <person name="Nhani A. Jr."/>
            <person name="Nobrega F.G."/>
            <person name="Nunes L.R."/>
            <person name="Oliveira M.A."/>
            <person name="de Oliveira M.C."/>
            <person name="de Oliveira R.C."/>
            <person name="Palmieri D.A."/>
            <person name="Paris A."/>
            <person name="Peixoto B.R."/>
            <person name="Pereira G.A.G."/>
            <person name="Pereira H.A. Jr."/>
            <person name="Pesquero J.B."/>
            <person name="Quaggio R.B."/>
            <person name="Roberto P.G."/>
            <person name="Rodrigues V."/>
            <person name="de Rosa A.J.M."/>
            <person name="de Rosa V.E. Jr."/>
            <person name="de Sa R.G."/>
            <person name="Santelli R.V."/>
            <person name="Sawasaki H.E."/>
            <person name="da Silva A.C.R."/>
            <person name="da Silva A.M."/>
            <person name="da Silva F.R."/>
            <person name="Silva W.A. Jr."/>
            <person name="da Silveira J.F."/>
            <person name="Silvestri M.L.Z."/>
            <person name="Siqueira W.J."/>
            <person name="de Souza A.A."/>
            <person name="de Souza A.P."/>
            <person name="Terenzi M.F."/>
            <person name="Truffi D."/>
            <person name="Tsai S.M."/>
            <person name="Tsuhako M.H."/>
            <person name="Vallada H."/>
            <person name="Van Sluys M.A."/>
            <person name="Verjovski-Almeida S."/>
            <person name="Vettore A.L."/>
            <person name="Zago M.A."/>
            <person name="Zatz M."/>
            <person name="Meidanis J."/>
            <person name="Setubal J.C."/>
        </authorList>
    </citation>
    <scope>NUCLEOTIDE SEQUENCE [LARGE SCALE GENOMIC DNA]</scope>
    <source>
        <strain>9a5c</strain>
    </source>
</reference>
<dbReference type="EC" id="2.1.1.228"/>
<dbReference type="EMBL" id="AE003849">
    <property type="protein sequence ID" value="AAF82922.1"/>
    <property type="molecule type" value="Genomic_DNA"/>
</dbReference>
<dbReference type="PIR" id="B82848">
    <property type="entry name" value="B82848"/>
</dbReference>
<dbReference type="RefSeq" id="WP_010892655.1">
    <property type="nucleotide sequence ID" value="NC_002488.3"/>
</dbReference>
<dbReference type="SMR" id="Q9PH37"/>
<dbReference type="STRING" id="160492.XF_0109"/>
<dbReference type="KEGG" id="xfa:XF_0109"/>
<dbReference type="eggNOG" id="COG0336">
    <property type="taxonomic scope" value="Bacteria"/>
</dbReference>
<dbReference type="HOGENOM" id="CLU_047363_0_1_6"/>
<dbReference type="Proteomes" id="UP000000812">
    <property type="component" value="Chromosome"/>
</dbReference>
<dbReference type="GO" id="GO:0005829">
    <property type="term" value="C:cytosol"/>
    <property type="evidence" value="ECO:0007669"/>
    <property type="project" value="TreeGrafter"/>
</dbReference>
<dbReference type="GO" id="GO:0052906">
    <property type="term" value="F:tRNA (guanine(37)-N1)-methyltransferase activity"/>
    <property type="evidence" value="ECO:0007669"/>
    <property type="project" value="UniProtKB-UniRule"/>
</dbReference>
<dbReference type="GO" id="GO:0002939">
    <property type="term" value="P:tRNA N1-guanine methylation"/>
    <property type="evidence" value="ECO:0007669"/>
    <property type="project" value="TreeGrafter"/>
</dbReference>
<dbReference type="CDD" id="cd18080">
    <property type="entry name" value="TrmD-like"/>
    <property type="match status" value="1"/>
</dbReference>
<dbReference type="FunFam" id="1.10.1270.20:FF:000001">
    <property type="entry name" value="tRNA (guanine-N(1)-)-methyltransferase"/>
    <property type="match status" value="1"/>
</dbReference>
<dbReference type="FunFam" id="3.40.1280.10:FF:000001">
    <property type="entry name" value="tRNA (guanine-N(1)-)-methyltransferase"/>
    <property type="match status" value="1"/>
</dbReference>
<dbReference type="Gene3D" id="3.40.1280.10">
    <property type="match status" value="1"/>
</dbReference>
<dbReference type="Gene3D" id="1.10.1270.20">
    <property type="entry name" value="tRNA(m1g37)methyltransferase, domain 2"/>
    <property type="match status" value="1"/>
</dbReference>
<dbReference type="HAMAP" id="MF_00605">
    <property type="entry name" value="TrmD"/>
    <property type="match status" value="1"/>
</dbReference>
<dbReference type="InterPro" id="IPR029028">
    <property type="entry name" value="Alpha/beta_knot_MTases"/>
</dbReference>
<dbReference type="InterPro" id="IPR023148">
    <property type="entry name" value="tRNA_m1G_MeTrfase_C_sf"/>
</dbReference>
<dbReference type="InterPro" id="IPR002649">
    <property type="entry name" value="tRNA_m1G_MeTrfase_TrmD"/>
</dbReference>
<dbReference type="InterPro" id="IPR029026">
    <property type="entry name" value="tRNA_m1G_MTases_N"/>
</dbReference>
<dbReference type="InterPro" id="IPR016009">
    <property type="entry name" value="tRNA_MeTrfase_TRMD/TRM10"/>
</dbReference>
<dbReference type="NCBIfam" id="NF000648">
    <property type="entry name" value="PRK00026.1"/>
    <property type="match status" value="1"/>
</dbReference>
<dbReference type="NCBIfam" id="TIGR00088">
    <property type="entry name" value="trmD"/>
    <property type="match status" value="1"/>
</dbReference>
<dbReference type="PANTHER" id="PTHR46417">
    <property type="entry name" value="TRNA (GUANINE-N(1)-)-METHYLTRANSFERASE"/>
    <property type="match status" value="1"/>
</dbReference>
<dbReference type="PANTHER" id="PTHR46417:SF1">
    <property type="entry name" value="TRNA (GUANINE-N(1)-)-METHYLTRANSFERASE"/>
    <property type="match status" value="1"/>
</dbReference>
<dbReference type="Pfam" id="PF01746">
    <property type="entry name" value="tRNA_m1G_MT"/>
    <property type="match status" value="1"/>
</dbReference>
<dbReference type="PIRSF" id="PIRSF000386">
    <property type="entry name" value="tRNA_mtase"/>
    <property type="match status" value="1"/>
</dbReference>
<dbReference type="SUPFAM" id="SSF75217">
    <property type="entry name" value="alpha/beta knot"/>
    <property type="match status" value="1"/>
</dbReference>